<comment type="catalytic activity">
    <reaction evidence="1">
        <text>adenine + H2O + H(+) = hypoxanthine + NH4(+)</text>
        <dbReference type="Rhea" id="RHEA:23688"/>
        <dbReference type="ChEBI" id="CHEBI:15377"/>
        <dbReference type="ChEBI" id="CHEBI:15378"/>
        <dbReference type="ChEBI" id="CHEBI:16708"/>
        <dbReference type="ChEBI" id="CHEBI:17368"/>
        <dbReference type="ChEBI" id="CHEBI:28938"/>
        <dbReference type="EC" id="3.5.4.2"/>
    </reaction>
</comment>
<comment type="cofactor">
    <cofactor evidence="1">
        <name>Mn(2+)</name>
        <dbReference type="ChEBI" id="CHEBI:29035"/>
    </cofactor>
</comment>
<comment type="similarity">
    <text evidence="1">Belongs to the metallo-dependent hydrolases superfamily. Adenine deaminase family.</text>
</comment>
<proteinExistence type="inferred from homology"/>
<dbReference type="EC" id="3.5.4.2" evidence="1"/>
<dbReference type="EMBL" id="AE006469">
    <property type="protein sequence ID" value="AAK65602.1"/>
    <property type="molecule type" value="Genomic_DNA"/>
</dbReference>
<dbReference type="PIR" id="H95379">
    <property type="entry name" value="H95379"/>
</dbReference>
<dbReference type="RefSeq" id="NP_436190.1">
    <property type="nucleotide sequence ID" value="NC_003037.1"/>
</dbReference>
<dbReference type="RefSeq" id="WP_010967907.1">
    <property type="nucleotide sequence ID" value="NC_003037.1"/>
</dbReference>
<dbReference type="SMR" id="Q92YE0"/>
<dbReference type="EnsemblBacteria" id="AAK65602">
    <property type="protein sequence ID" value="AAK65602"/>
    <property type="gene ID" value="SMa1718"/>
</dbReference>
<dbReference type="KEGG" id="sme:SMa1718"/>
<dbReference type="PATRIC" id="fig|266834.11.peg.973"/>
<dbReference type="HOGENOM" id="CLU_027935_0_0_5"/>
<dbReference type="OrthoDB" id="9775607at2"/>
<dbReference type="Proteomes" id="UP000001976">
    <property type="component" value="Plasmid pSymA"/>
</dbReference>
<dbReference type="GO" id="GO:0000034">
    <property type="term" value="F:adenine deaminase activity"/>
    <property type="evidence" value="ECO:0007669"/>
    <property type="project" value="UniProtKB-UniRule"/>
</dbReference>
<dbReference type="GO" id="GO:0006146">
    <property type="term" value="P:adenine catabolic process"/>
    <property type="evidence" value="ECO:0007669"/>
    <property type="project" value="InterPro"/>
</dbReference>
<dbReference type="CDD" id="cd01295">
    <property type="entry name" value="AdeC"/>
    <property type="match status" value="1"/>
</dbReference>
<dbReference type="Gene3D" id="3.20.20.140">
    <property type="entry name" value="Metal-dependent hydrolases"/>
    <property type="match status" value="1"/>
</dbReference>
<dbReference type="Gene3D" id="2.30.40.10">
    <property type="entry name" value="Urease, subunit C, domain 1"/>
    <property type="match status" value="1"/>
</dbReference>
<dbReference type="HAMAP" id="MF_01518">
    <property type="entry name" value="Adenine_deamin"/>
    <property type="match status" value="1"/>
</dbReference>
<dbReference type="InterPro" id="IPR006679">
    <property type="entry name" value="Adenine_deam"/>
</dbReference>
<dbReference type="InterPro" id="IPR026912">
    <property type="entry name" value="Adenine_deam_C"/>
</dbReference>
<dbReference type="InterPro" id="IPR006680">
    <property type="entry name" value="Amidohydro-rel"/>
</dbReference>
<dbReference type="InterPro" id="IPR011059">
    <property type="entry name" value="Metal-dep_hydrolase_composite"/>
</dbReference>
<dbReference type="InterPro" id="IPR032466">
    <property type="entry name" value="Metal_Hydrolase"/>
</dbReference>
<dbReference type="PANTHER" id="PTHR11113:SF2">
    <property type="entry name" value="ADENINE DEAMINASE"/>
    <property type="match status" value="1"/>
</dbReference>
<dbReference type="PANTHER" id="PTHR11113">
    <property type="entry name" value="N-ACETYLGLUCOSAMINE-6-PHOSPHATE DEACETYLASE"/>
    <property type="match status" value="1"/>
</dbReference>
<dbReference type="Pfam" id="PF13382">
    <property type="entry name" value="Adenine_deam_C"/>
    <property type="match status" value="1"/>
</dbReference>
<dbReference type="Pfam" id="PF01979">
    <property type="entry name" value="Amidohydro_1"/>
    <property type="match status" value="1"/>
</dbReference>
<dbReference type="SUPFAM" id="SSF51338">
    <property type="entry name" value="Composite domain of metallo-dependent hydrolases"/>
    <property type="match status" value="1"/>
</dbReference>
<dbReference type="SUPFAM" id="SSF51556">
    <property type="entry name" value="Metallo-dependent hydrolases"/>
    <property type="match status" value="1"/>
</dbReference>
<reference key="1">
    <citation type="journal article" date="2001" name="Proc. Natl. Acad. Sci. U.S.A.">
        <title>Nucleotide sequence and predicted functions of the entire Sinorhizobium meliloti pSymA megaplasmid.</title>
        <authorList>
            <person name="Barnett M.J."/>
            <person name="Fisher R.F."/>
            <person name="Jones T."/>
            <person name="Komp C."/>
            <person name="Abola A.P."/>
            <person name="Barloy-Hubler F."/>
            <person name="Bowser L."/>
            <person name="Capela D."/>
            <person name="Galibert F."/>
            <person name="Gouzy J."/>
            <person name="Gurjal M."/>
            <person name="Hong A."/>
            <person name="Huizar L."/>
            <person name="Hyman R.W."/>
            <person name="Kahn D."/>
            <person name="Kahn M.L."/>
            <person name="Kalman S."/>
            <person name="Keating D.H."/>
            <person name="Palm C."/>
            <person name="Peck M.C."/>
            <person name="Surzycki R."/>
            <person name="Wells D.H."/>
            <person name="Yeh K.-C."/>
            <person name="Davis R.W."/>
            <person name="Federspiel N.A."/>
            <person name="Long S.R."/>
        </authorList>
    </citation>
    <scope>NUCLEOTIDE SEQUENCE [LARGE SCALE GENOMIC DNA]</scope>
    <source>
        <strain>1021</strain>
    </source>
</reference>
<reference key="2">
    <citation type="journal article" date="2001" name="Science">
        <title>The composite genome of the legume symbiont Sinorhizobium meliloti.</title>
        <authorList>
            <person name="Galibert F."/>
            <person name="Finan T.M."/>
            <person name="Long S.R."/>
            <person name="Puehler A."/>
            <person name="Abola P."/>
            <person name="Ampe F."/>
            <person name="Barloy-Hubler F."/>
            <person name="Barnett M.J."/>
            <person name="Becker A."/>
            <person name="Boistard P."/>
            <person name="Bothe G."/>
            <person name="Boutry M."/>
            <person name="Bowser L."/>
            <person name="Buhrmester J."/>
            <person name="Cadieu E."/>
            <person name="Capela D."/>
            <person name="Chain P."/>
            <person name="Cowie A."/>
            <person name="Davis R.W."/>
            <person name="Dreano S."/>
            <person name="Federspiel N.A."/>
            <person name="Fisher R.F."/>
            <person name="Gloux S."/>
            <person name="Godrie T."/>
            <person name="Goffeau A."/>
            <person name="Golding B."/>
            <person name="Gouzy J."/>
            <person name="Gurjal M."/>
            <person name="Hernandez-Lucas I."/>
            <person name="Hong A."/>
            <person name="Huizar L."/>
            <person name="Hyman R.W."/>
            <person name="Jones T."/>
            <person name="Kahn D."/>
            <person name="Kahn M.L."/>
            <person name="Kalman S."/>
            <person name="Keating D.H."/>
            <person name="Kiss E."/>
            <person name="Komp C."/>
            <person name="Lelaure V."/>
            <person name="Masuy D."/>
            <person name="Palm C."/>
            <person name="Peck M.C."/>
            <person name="Pohl T.M."/>
            <person name="Portetelle D."/>
            <person name="Purnelle B."/>
            <person name="Ramsperger U."/>
            <person name="Surzycki R."/>
            <person name="Thebault P."/>
            <person name="Vandenbol M."/>
            <person name="Vorhoelter F.J."/>
            <person name="Weidner S."/>
            <person name="Wells D.H."/>
            <person name="Wong K."/>
            <person name="Yeh K.-C."/>
            <person name="Batut J."/>
        </authorList>
    </citation>
    <scope>NUCLEOTIDE SEQUENCE [LARGE SCALE GENOMIC DNA]</scope>
    <source>
        <strain>1021</strain>
    </source>
</reference>
<keyword id="KW-0378">Hydrolase</keyword>
<keyword id="KW-0464">Manganese</keyword>
<keyword id="KW-0614">Plasmid</keyword>
<keyword id="KW-1185">Reference proteome</keyword>
<sequence>MSDVREFIRAASGGESKATVAVCGGRLVNVVSEEIYQADVAIYRDRIIAVGDISEYIGPQTEIIDAADRYLTPGMIDGHLHVECSKLSLTSFAKAVLPLGTTSIVSGLDQIIVVGGPDAAREFLDEVRQTPLKVFWGAPCKTPYTMPRSTVGHYFSPKDHRDTHHWPECVGIWETVREFIQEEDEDVLQAIEIGQANRLPVLGCCPMTRGARLNGYMQSGVRADHESYTPEEMLEKLRAGMHVVVRESSISHFLSDNLRIVTEMGVKALRRISFCTDDVVASDILSRGHLDNMVRMAMAMGISPMAAIQMATINGAEALRIDHKVGSISPGRTADILIVNDLRDFRIEAVVANGTVAARDGRMVVKLVPPQRSAGLLRSVKTTPVTAADIAVPFTGTTPFAEVLAIAVTPEKVFVRTRRDVRLPVVDGKILADASQNVQYVTVVERYGKTLNRPVAFVSGFNLKSGAIASSTAPDDNNIICIGADPQDMAIAINHLVANNGGQVVVDKGEVVEFLHLPIGGIVSDIDPAEMAAFELRLDEAARRLGCDLPWPFMYMFVLQITAIPDYAMTDLGVVDCVNLRIISPLAPDGPAKANTLAAE</sequence>
<name>ADEC4_RHIME</name>
<evidence type="ECO:0000255" key="1">
    <source>
        <dbReference type="HAMAP-Rule" id="MF_01518"/>
    </source>
</evidence>
<organism>
    <name type="scientific">Rhizobium meliloti (strain 1021)</name>
    <name type="common">Ensifer meliloti</name>
    <name type="synonym">Sinorhizobium meliloti</name>
    <dbReference type="NCBI Taxonomy" id="266834"/>
    <lineage>
        <taxon>Bacteria</taxon>
        <taxon>Pseudomonadati</taxon>
        <taxon>Pseudomonadota</taxon>
        <taxon>Alphaproteobacteria</taxon>
        <taxon>Hyphomicrobiales</taxon>
        <taxon>Rhizobiaceae</taxon>
        <taxon>Sinorhizobium/Ensifer group</taxon>
        <taxon>Sinorhizobium</taxon>
    </lineage>
</organism>
<accession>Q92YE0</accession>
<gene>
    <name evidence="1" type="primary">ade4</name>
    <name type="synonym">adeC4</name>
    <name type="ordered locus">RA0944</name>
    <name type="ORF">SMa1718</name>
</gene>
<geneLocation type="plasmid">
    <name>pSymA</name>
    <name>megaplasmid 1</name>
</geneLocation>
<feature type="chain" id="PRO_0000142435" description="Adenine deaminase 4">
    <location>
        <begin position="1"/>
        <end position="600"/>
    </location>
</feature>
<protein>
    <recommendedName>
        <fullName evidence="1">Adenine deaminase 4</fullName>
        <shortName evidence="1">Adenase 4</shortName>
        <shortName evidence="1">Adenine aminase 4</shortName>
        <ecNumber evidence="1">3.5.4.2</ecNumber>
    </recommendedName>
</protein>